<gene>
    <name evidence="1" type="primary">iscS</name>
    <name type="ordered locus">Rmag_0577</name>
</gene>
<organism>
    <name type="scientific">Ruthia magnifica subsp. Calyptogena magnifica</name>
    <dbReference type="NCBI Taxonomy" id="413404"/>
    <lineage>
        <taxon>Bacteria</taxon>
        <taxon>Pseudomonadati</taxon>
        <taxon>Pseudomonadota</taxon>
        <taxon>Gammaproteobacteria</taxon>
        <taxon>Candidatus Pseudothioglobaceae</taxon>
        <taxon>Candidatus Ruthturnera</taxon>
    </lineage>
</organism>
<accession>A1AWM1</accession>
<name>ISCS_RUTMC</name>
<proteinExistence type="inferred from homology"/>
<dbReference type="EC" id="2.8.1.7" evidence="1"/>
<dbReference type="EMBL" id="CP000488">
    <property type="protein sequence ID" value="ABL02328.1"/>
    <property type="molecule type" value="Genomic_DNA"/>
</dbReference>
<dbReference type="RefSeq" id="WP_011737953.1">
    <property type="nucleotide sequence ID" value="NC_008610.1"/>
</dbReference>
<dbReference type="SMR" id="A1AWM1"/>
<dbReference type="STRING" id="413404.Rmag_0577"/>
<dbReference type="KEGG" id="rma:Rmag_0577"/>
<dbReference type="eggNOG" id="COG1104">
    <property type="taxonomic scope" value="Bacteria"/>
</dbReference>
<dbReference type="HOGENOM" id="CLU_003433_0_2_6"/>
<dbReference type="OrthoDB" id="9808002at2"/>
<dbReference type="UniPathway" id="UPA00266"/>
<dbReference type="Proteomes" id="UP000002587">
    <property type="component" value="Chromosome"/>
</dbReference>
<dbReference type="GO" id="GO:1990221">
    <property type="term" value="C:L-cysteine desulfurase complex"/>
    <property type="evidence" value="ECO:0007669"/>
    <property type="project" value="UniProtKB-ARBA"/>
</dbReference>
<dbReference type="GO" id="GO:0051537">
    <property type="term" value="F:2 iron, 2 sulfur cluster binding"/>
    <property type="evidence" value="ECO:0007669"/>
    <property type="project" value="UniProtKB-UniRule"/>
</dbReference>
<dbReference type="GO" id="GO:0031071">
    <property type="term" value="F:cysteine desulfurase activity"/>
    <property type="evidence" value="ECO:0007669"/>
    <property type="project" value="UniProtKB-UniRule"/>
</dbReference>
<dbReference type="GO" id="GO:0046872">
    <property type="term" value="F:metal ion binding"/>
    <property type="evidence" value="ECO:0007669"/>
    <property type="project" value="UniProtKB-KW"/>
</dbReference>
<dbReference type="GO" id="GO:0030170">
    <property type="term" value="F:pyridoxal phosphate binding"/>
    <property type="evidence" value="ECO:0007669"/>
    <property type="project" value="UniProtKB-UniRule"/>
</dbReference>
<dbReference type="GO" id="GO:0044571">
    <property type="term" value="P:[2Fe-2S] cluster assembly"/>
    <property type="evidence" value="ECO:0007669"/>
    <property type="project" value="UniProtKB-UniRule"/>
</dbReference>
<dbReference type="FunFam" id="3.40.640.10:FF:000003">
    <property type="entry name" value="Cysteine desulfurase IscS"/>
    <property type="match status" value="1"/>
</dbReference>
<dbReference type="FunFam" id="3.90.1150.10:FF:000002">
    <property type="entry name" value="Cysteine desulfurase IscS"/>
    <property type="match status" value="1"/>
</dbReference>
<dbReference type="Gene3D" id="3.90.1150.10">
    <property type="entry name" value="Aspartate Aminotransferase, domain 1"/>
    <property type="match status" value="1"/>
</dbReference>
<dbReference type="Gene3D" id="3.40.640.10">
    <property type="entry name" value="Type I PLP-dependent aspartate aminotransferase-like (Major domain)"/>
    <property type="match status" value="1"/>
</dbReference>
<dbReference type="HAMAP" id="MF_00331">
    <property type="entry name" value="Cys_desulf_IscS"/>
    <property type="match status" value="1"/>
</dbReference>
<dbReference type="InterPro" id="IPR000192">
    <property type="entry name" value="Aminotrans_V_dom"/>
</dbReference>
<dbReference type="InterPro" id="IPR020578">
    <property type="entry name" value="Aminotrans_V_PyrdxlP_BS"/>
</dbReference>
<dbReference type="InterPro" id="IPR010240">
    <property type="entry name" value="Cys_deSase_IscS"/>
</dbReference>
<dbReference type="InterPro" id="IPR016454">
    <property type="entry name" value="Cysteine_dSase"/>
</dbReference>
<dbReference type="InterPro" id="IPR015424">
    <property type="entry name" value="PyrdxlP-dep_Trfase"/>
</dbReference>
<dbReference type="InterPro" id="IPR015421">
    <property type="entry name" value="PyrdxlP-dep_Trfase_major"/>
</dbReference>
<dbReference type="InterPro" id="IPR015422">
    <property type="entry name" value="PyrdxlP-dep_Trfase_small"/>
</dbReference>
<dbReference type="NCBIfam" id="TIGR02006">
    <property type="entry name" value="IscS"/>
    <property type="match status" value="1"/>
</dbReference>
<dbReference type="NCBIfam" id="NF010611">
    <property type="entry name" value="PRK14012.1"/>
    <property type="match status" value="1"/>
</dbReference>
<dbReference type="PANTHER" id="PTHR11601:SF34">
    <property type="entry name" value="CYSTEINE DESULFURASE"/>
    <property type="match status" value="1"/>
</dbReference>
<dbReference type="PANTHER" id="PTHR11601">
    <property type="entry name" value="CYSTEINE DESULFURYLASE FAMILY MEMBER"/>
    <property type="match status" value="1"/>
</dbReference>
<dbReference type="Pfam" id="PF00266">
    <property type="entry name" value="Aminotran_5"/>
    <property type="match status" value="1"/>
</dbReference>
<dbReference type="PIRSF" id="PIRSF005572">
    <property type="entry name" value="NifS"/>
    <property type="match status" value="1"/>
</dbReference>
<dbReference type="SUPFAM" id="SSF53383">
    <property type="entry name" value="PLP-dependent transferases"/>
    <property type="match status" value="1"/>
</dbReference>
<dbReference type="PROSITE" id="PS00595">
    <property type="entry name" value="AA_TRANSFER_CLASS_5"/>
    <property type="match status" value="1"/>
</dbReference>
<evidence type="ECO:0000255" key="1">
    <source>
        <dbReference type="HAMAP-Rule" id="MF_00331"/>
    </source>
</evidence>
<protein>
    <recommendedName>
        <fullName evidence="1">Cysteine desulfurase IscS</fullName>
        <ecNumber evidence="1">2.8.1.7</ecNumber>
    </recommendedName>
</protein>
<reference key="1">
    <citation type="journal article" date="2007" name="Science">
        <title>The Calyptogena magnifica chemoautotrophic symbiont genome.</title>
        <authorList>
            <person name="Newton I.L.G."/>
            <person name="Woyke T."/>
            <person name="Auchtung T.A."/>
            <person name="Dilly G.F."/>
            <person name="Dutton R.J."/>
            <person name="Fisher M.C."/>
            <person name="Fontanez K.M."/>
            <person name="Lau E."/>
            <person name="Stewart F.J."/>
            <person name="Richardson P.M."/>
            <person name="Barry K.W."/>
            <person name="Saunders E."/>
            <person name="Detter J.C."/>
            <person name="Wu D."/>
            <person name="Eisen J.A."/>
            <person name="Cavanaugh C.M."/>
        </authorList>
    </citation>
    <scope>NUCLEOTIDE SEQUENCE [LARGE SCALE GENOMIC DNA]</scope>
</reference>
<comment type="function">
    <text evidence="1">Master enzyme that delivers sulfur to a number of partners involved in Fe-S cluster assembly, tRNA modification or cofactor biosynthesis. Catalyzes the removal of elemental sulfur atoms from cysteine to produce alanine. Functions as a sulfur delivery protein for Fe-S cluster synthesis onto IscU, an Fe-S scaffold assembly protein, as well as other S acceptor proteins.</text>
</comment>
<comment type="catalytic activity">
    <reaction evidence="1">
        <text>(sulfur carrier)-H + L-cysteine = (sulfur carrier)-SH + L-alanine</text>
        <dbReference type="Rhea" id="RHEA:43892"/>
        <dbReference type="Rhea" id="RHEA-COMP:14737"/>
        <dbReference type="Rhea" id="RHEA-COMP:14739"/>
        <dbReference type="ChEBI" id="CHEBI:29917"/>
        <dbReference type="ChEBI" id="CHEBI:35235"/>
        <dbReference type="ChEBI" id="CHEBI:57972"/>
        <dbReference type="ChEBI" id="CHEBI:64428"/>
        <dbReference type="EC" id="2.8.1.7"/>
    </reaction>
</comment>
<comment type="cofactor">
    <cofactor evidence="1">
        <name>pyridoxal 5'-phosphate</name>
        <dbReference type="ChEBI" id="CHEBI:597326"/>
    </cofactor>
</comment>
<comment type="pathway">
    <text evidence="1">Cofactor biosynthesis; iron-sulfur cluster biosynthesis.</text>
</comment>
<comment type="subunit">
    <text evidence="1">Homodimer. Forms a heterotetramer with IscU, interacts with other sulfur acceptors.</text>
</comment>
<comment type="subcellular location">
    <subcellularLocation>
        <location evidence="1">Cytoplasm</location>
    </subcellularLocation>
</comment>
<comment type="similarity">
    <text evidence="1">Belongs to the class-V pyridoxal-phosphate-dependent aminotransferase family. NifS/IscS subfamily.</text>
</comment>
<keyword id="KW-0001">2Fe-2S</keyword>
<keyword id="KW-0963">Cytoplasm</keyword>
<keyword id="KW-0408">Iron</keyword>
<keyword id="KW-0411">Iron-sulfur</keyword>
<keyword id="KW-0479">Metal-binding</keyword>
<keyword id="KW-0663">Pyridoxal phosphate</keyword>
<keyword id="KW-0808">Transferase</keyword>
<sequence>MSTPTYMDYSATTPVDERVAQKMMQYLTTDGNFGNPASNSHYYGWKADEAVKKARHQVADLVGADSKEIVWTSGATESDNLAIKGIAHFYHKKGNHIITLKTEHKAVLDTCRQLERENYEATYLDPMPNGLLDLNVLKKAIREDTILVSIMHVNNEIGVIQDIEAIGNLCRENKIFFHVDAAQSAGKVTIDLSKLPVDLMSFSAHKIYGPKGMGALYVRRKPRVRIEAQMHGGGHERGMRSGTLATHQIVGMGEAFAIAQAEMKEENSKIRQLRDRLLAGFVNMEEVVINGDMKNRIPGNLNISFNYVEGESLMMAVNDIAVSSGSACTSSSLEPSYVLRALGLSDELAHSSIRFTIGRYTTEAQVDKAINLVRTKVDKLRDLSPLWDMFKDGIDISKVEWTAH</sequence>
<feature type="chain" id="PRO_1000019437" description="Cysteine desulfurase IscS">
    <location>
        <begin position="1"/>
        <end position="404"/>
    </location>
</feature>
<feature type="active site" description="Cysteine persulfide intermediate" evidence="1">
    <location>
        <position position="328"/>
    </location>
</feature>
<feature type="binding site" evidence="1">
    <location>
        <begin position="75"/>
        <end position="76"/>
    </location>
    <ligand>
        <name>pyridoxal 5'-phosphate</name>
        <dbReference type="ChEBI" id="CHEBI:597326"/>
    </ligand>
</feature>
<feature type="binding site" evidence="1">
    <location>
        <position position="155"/>
    </location>
    <ligand>
        <name>pyridoxal 5'-phosphate</name>
        <dbReference type="ChEBI" id="CHEBI:597326"/>
    </ligand>
</feature>
<feature type="binding site" evidence="1">
    <location>
        <position position="183"/>
    </location>
    <ligand>
        <name>pyridoxal 5'-phosphate</name>
        <dbReference type="ChEBI" id="CHEBI:597326"/>
    </ligand>
</feature>
<feature type="binding site" evidence="1">
    <location>
        <begin position="203"/>
        <end position="205"/>
    </location>
    <ligand>
        <name>pyridoxal 5'-phosphate</name>
        <dbReference type="ChEBI" id="CHEBI:597326"/>
    </ligand>
</feature>
<feature type="binding site" evidence="1">
    <location>
        <position position="243"/>
    </location>
    <ligand>
        <name>pyridoxal 5'-phosphate</name>
        <dbReference type="ChEBI" id="CHEBI:597326"/>
    </ligand>
</feature>
<feature type="binding site" description="via persulfide group" evidence="1">
    <location>
        <position position="328"/>
    </location>
    <ligand>
        <name>[2Fe-2S] cluster</name>
        <dbReference type="ChEBI" id="CHEBI:190135"/>
        <note>ligand shared with IscU</note>
    </ligand>
</feature>
<feature type="modified residue" description="N6-(pyridoxal phosphate)lysine" evidence="1">
    <location>
        <position position="206"/>
    </location>
</feature>